<evidence type="ECO:0000255" key="1">
    <source>
        <dbReference type="HAMAP-Rule" id="MF_01210"/>
    </source>
</evidence>
<evidence type="ECO:0000269" key="2">
    <source>
    </source>
</evidence>
<evidence type="ECO:0000269" key="3">
    <source>
    </source>
</evidence>
<evidence type="ECO:0000269" key="4">
    <source>
    </source>
</evidence>
<evidence type="ECO:0000269" key="5">
    <source>
    </source>
</evidence>
<evidence type="ECO:0000269" key="6">
    <source>
    </source>
</evidence>
<evidence type="ECO:0000269" key="7">
    <source>
    </source>
</evidence>
<evidence type="ECO:0000269" key="8">
    <source>
    </source>
</evidence>
<evidence type="ECO:0000269" key="9">
    <source>
    </source>
</evidence>
<evidence type="ECO:0000269" key="10">
    <source>
    </source>
</evidence>
<evidence type="ECO:0000269" key="11">
    <source>
    </source>
</evidence>
<evidence type="ECO:0000269" key="12">
    <source ref="8"/>
</evidence>
<evidence type="ECO:0000303" key="13">
    <source>
    </source>
</evidence>
<evidence type="ECO:0000305" key="14">
    <source ref="8"/>
</evidence>
<evidence type="ECO:0007744" key="15">
    <source>
        <dbReference type="PDB" id="1A9X"/>
    </source>
</evidence>
<evidence type="ECO:0007744" key="16">
    <source>
        <dbReference type="PDB" id="1BXR"/>
    </source>
</evidence>
<evidence type="ECO:0007744" key="17">
    <source>
        <dbReference type="PDB" id="1C30"/>
    </source>
</evidence>
<evidence type="ECO:0007744" key="18">
    <source>
        <dbReference type="PDB" id="1C3O"/>
    </source>
</evidence>
<evidence type="ECO:0007744" key="19">
    <source>
        <dbReference type="PDB" id="1CE8"/>
    </source>
</evidence>
<evidence type="ECO:0007744" key="20">
    <source>
        <dbReference type="PDB" id="1CS0"/>
    </source>
</evidence>
<evidence type="ECO:0007744" key="21">
    <source>
        <dbReference type="PDB" id="1JDB"/>
    </source>
</evidence>
<evidence type="ECO:0007744" key="22">
    <source>
        <dbReference type="PDB" id="1KEE"/>
    </source>
</evidence>
<evidence type="ECO:0007744" key="23">
    <source>
        <dbReference type="PDB" id="1M6V"/>
    </source>
</evidence>
<evidence type="ECO:0007744" key="24">
    <source>
        <dbReference type="PDB" id="1T36"/>
    </source>
</evidence>
<evidence type="ECO:0007829" key="25">
    <source>
        <dbReference type="PDB" id="1A9X"/>
    </source>
</evidence>
<evidence type="ECO:0007829" key="26">
    <source>
        <dbReference type="PDB" id="1BXR"/>
    </source>
</evidence>
<evidence type="ECO:0007829" key="27">
    <source>
        <dbReference type="PDB" id="1CS0"/>
    </source>
</evidence>
<evidence type="ECO:0007829" key="28">
    <source>
        <dbReference type="PDB" id="1JDB"/>
    </source>
</evidence>
<dbReference type="EC" id="6.3.4.16" evidence="1 8"/>
<dbReference type="EC" id="6.3.5.5" evidence="1 8"/>
<dbReference type="EMBL" id="J01597">
    <property type="protein sequence ID" value="AAA23539.1"/>
    <property type="molecule type" value="Genomic_DNA"/>
</dbReference>
<dbReference type="EMBL" id="V01500">
    <property type="protein sequence ID" value="CAA24744.1"/>
    <property type="molecule type" value="Genomic_DNA"/>
</dbReference>
<dbReference type="EMBL" id="U00096">
    <property type="protein sequence ID" value="AAC73144.1"/>
    <property type="molecule type" value="Genomic_DNA"/>
</dbReference>
<dbReference type="EMBL" id="AP009048">
    <property type="protein sequence ID" value="BAB96602.1"/>
    <property type="molecule type" value="Genomic_DNA"/>
</dbReference>
<dbReference type="PIR" id="A01198">
    <property type="entry name" value="SYECCP"/>
</dbReference>
<dbReference type="RefSeq" id="NP_414574.1">
    <property type="nucleotide sequence ID" value="NC_000913.3"/>
</dbReference>
<dbReference type="RefSeq" id="WP_001126348.1">
    <property type="nucleotide sequence ID" value="NZ_LN832404.1"/>
</dbReference>
<dbReference type="PDB" id="1A9X">
    <property type="method" value="X-ray"/>
    <property type="resolution" value="1.80 A"/>
    <property type="chains" value="A/C/E/G=1-1073"/>
</dbReference>
<dbReference type="PDB" id="1BXR">
    <property type="method" value="X-ray"/>
    <property type="resolution" value="2.10 A"/>
    <property type="chains" value="A/C/E/G=1-1073"/>
</dbReference>
<dbReference type="PDB" id="1C30">
    <property type="method" value="X-ray"/>
    <property type="resolution" value="2.00 A"/>
    <property type="chains" value="A/C/E/G=1-1073"/>
</dbReference>
<dbReference type="PDB" id="1C3O">
    <property type="method" value="X-ray"/>
    <property type="resolution" value="2.10 A"/>
    <property type="chains" value="A/C/E/G=1-1073"/>
</dbReference>
<dbReference type="PDB" id="1CE8">
    <property type="method" value="X-ray"/>
    <property type="resolution" value="2.10 A"/>
    <property type="chains" value="A/C/E/G=1-1073"/>
</dbReference>
<dbReference type="PDB" id="1CS0">
    <property type="method" value="X-ray"/>
    <property type="resolution" value="2.00 A"/>
    <property type="chains" value="A/C/E/G=1-1073"/>
</dbReference>
<dbReference type="PDB" id="1JDB">
    <property type="method" value="X-ray"/>
    <property type="resolution" value="2.10 A"/>
    <property type="chains" value="B/E/H/K=1-1073"/>
</dbReference>
<dbReference type="PDB" id="1KEE">
    <property type="method" value="X-ray"/>
    <property type="resolution" value="2.10 A"/>
    <property type="chains" value="A/C/E/G=1-1073"/>
</dbReference>
<dbReference type="PDB" id="1M6V">
    <property type="method" value="X-ray"/>
    <property type="resolution" value="2.10 A"/>
    <property type="chains" value="A/C/E/G=1-1073"/>
</dbReference>
<dbReference type="PDB" id="1T36">
    <property type="method" value="X-ray"/>
    <property type="resolution" value="2.10 A"/>
    <property type="chains" value="A/C/E/G=1-1073"/>
</dbReference>
<dbReference type="PDBsum" id="1A9X"/>
<dbReference type="PDBsum" id="1BXR"/>
<dbReference type="PDBsum" id="1C30"/>
<dbReference type="PDBsum" id="1C3O"/>
<dbReference type="PDBsum" id="1CE8"/>
<dbReference type="PDBsum" id="1CS0"/>
<dbReference type="PDBsum" id="1JDB"/>
<dbReference type="PDBsum" id="1KEE"/>
<dbReference type="PDBsum" id="1M6V"/>
<dbReference type="PDBsum" id="1T36"/>
<dbReference type="SMR" id="P00968"/>
<dbReference type="BioGRID" id="4259726">
    <property type="interactions" value="51"/>
</dbReference>
<dbReference type="BioGRID" id="849177">
    <property type="interactions" value="2"/>
</dbReference>
<dbReference type="ComplexPortal" id="CPX-1937">
    <property type="entry name" value="Carbamoyl phosphate synthetase complex"/>
</dbReference>
<dbReference type="DIP" id="DIP-1025N"/>
<dbReference type="FunCoup" id="P00968">
    <property type="interactions" value="874"/>
</dbReference>
<dbReference type="IntAct" id="P00968">
    <property type="interactions" value="14"/>
</dbReference>
<dbReference type="STRING" id="511145.b0033"/>
<dbReference type="jPOST" id="P00968"/>
<dbReference type="PaxDb" id="511145-b0033"/>
<dbReference type="EnsemblBacteria" id="AAC73144">
    <property type="protein sequence ID" value="AAC73144"/>
    <property type="gene ID" value="b0033"/>
</dbReference>
<dbReference type="GeneID" id="944775"/>
<dbReference type="KEGG" id="ecj:JW0031"/>
<dbReference type="KEGG" id="eco:b0033"/>
<dbReference type="KEGG" id="ecoc:C3026_00170"/>
<dbReference type="PATRIC" id="fig|1411691.4.peg.2251"/>
<dbReference type="EchoBASE" id="EB0133"/>
<dbReference type="eggNOG" id="COG0458">
    <property type="taxonomic scope" value="Bacteria"/>
</dbReference>
<dbReference type="HOGENOM" id="CLU_000513_1_0_6"/>
<dbReference type="InParanoid" id="P00968"/>
<dbReference type="OMA" id="FPFNKFP"/>
<dbReference type="OrthoDB" id="9804197at2"/>
<dbReference type="PhylomeDB" id="P00968"/>
<dbReference type="BioCyc" id="EcoCyc:CARBPSYN-LARGE"/>
<dbReference type="BioCyc" id="MetaCyc:CARBPSYN-LARGE"/>
<dbReference type="BRENDA" id="6.3.5.5">
    <property type="organism ID" value="2026"/>
</dbReference>
<dbReference type="SABIO-RK" id="P00968"/>
<dbReference type="UniPathway" id="UPA00068">
    <property type="reaction ID" value="UER00171"/>
</dbReference>
<dbReference type="UniPathway" id="UPA00070">
    <property type="reaction ID" value="UER00115"/>
</dbReference>
<dbReference type="EvolutionaryTrace" id="P00968"/>
<dbReference type="PRO" id="PR:P00968"/>
<dbReference type="Proteomes" id="UP000000625">
    <property type="component" value="Chromosome"/>
</dbReference>
<dbReference type="GO" id="GO:0005951">
    <property type="term" value="C:carbamoyl-phosphate synthase complex"/>
    <property type="evidence" value="ECO:0000314"/>
    <property type="project" value="EcoCyc"/>
</dbReference>
<dbReference type="GO" id="GO:0005737">
    <property type="term" value="C:cytoplasm"/>
    <property type="evidence" value="ECO:0000318"/>
    <property type="project" value="GO_Central"/>
</dbReference>
<dbReference type="GO" id="GO:0005829">
    <property type="term" value="C:cytosol"/>
    <property type="evidence" value="ECO:0000314"/>
    <property type="project" value="EcoCyc"/>
</dbReference>
<dbReference type="GO" id="GO:0016597">
    <property type="term" value="F:amino acid binding"/>
    <property type="evidence" value="ECO:0000314"/>
    <property type="project" value="EcoliWiki"/>
</dbReference>
<dbReference type="GO" id="GO:0005524">
    <property type="term" value="F:ATP binding"/>
    <property type="evidence" value="ECO:0000314"/>
    <property type="project" value="EcoCyc"/>
</dbReference>
<dbReference type="GO" id="GO:0004087">
    <property type="term" value="F:carbamoyl-phosphate synthase (ammonia) activity"/>
    <property type="evidence" value="ECO:0000314"/>
    <property type="project" value="EcoliWiki"/>
</dbReference>
<dbReference type="GO" id="GO:0004088">
    <property type="term" value="F:carbamoyl-phosphate synthase (glutamine-hydrolyzing) activity"/>
    <property type="evidence" value="ECO:0007669"/>
    <property type="project" value="UniProtKB-UniRule"/>
</dbReference>
<dbReference type="GO" id="GO:0046872">
    <property type="term" value="F:metal ion binding"/>
    <property type="evidence" value="ECO:0000314"/>
    <property type="project" value="EcoliWiki"/>
</dbReference>
<dbReference type="GO" id="GO:0000166">
    <property type="term" value="F:nucleotide binding"/>
    <property type="evidence" value="ECO:0000314"/>
    <property type="project" value="EcoliWiki"/>
</dbReference>
<dbReference type="GO" id="GO:0044205">
    <property type="term" value="P:'de novo' UMP biosynthetic process"/>
    <property type="evidence" value="ECO:0007669"/>
    <property type="project" value="UniProtKB-UniRule"/>
</dbReference>
<dbReference type="GO" id="GO:0008652">
    <property type="term" value="P:amino acid biosynthetic process"/>
    <property type="evidence" value="ECO:0000315"/>
    <property type="project" value="EcoliWiki"/>
</dbReference>
<dbReference type="GO" id="GO:0006541">
    <property type="term" value="P:glutamine metabolic process"/>
    <property type="evidence" value="ECO:0000318"/>
    <property type="project" value="GO_Central"/>
</dbReference>
<dbReference type="GO" id="GO:0006526">
    <property type="term" value="P:L-arginine biosynthetic process"/>
    <property type="evidence" value="ECO:0000315"/>
    <property type="project" value="EcoCyc"/>
</dbReference>
<dbReference type="GO" id="GO:0019856">
    <property type="term" value="P:pyrimidine nucleobase biosynthetic process"/>
    <property type="evidence" value="ECO:0000315"/>
    <property type="project" value="EcoliWiki"/>
</dbReference>
<dbReference type="CDD" id="cd01424">
    <property type="entry name" value="MGS_CPS_II"/>
    <property type="match status" value="1"/>
</dbReference>
<dbReference type="FunFam" id="1.10.1030.10:FF:000002">
    <property type="entry name" value="Carbamoyl-phosphate synthase large chain"/>
    <property type="match status" value="1"/>
</dbReference>
<dbReference type="FunFam" id="3.30.1490.20:FF:000001">
    <property type="entry name" value="Carbamoyl-phosphate synthase large chain"/>
    <property type="match status" value="1"/>
</dbReference>
<dbReference type="FunFam" id="3.30.470.20:FF:000007">
    <property type="entry name" value="Carbamoyl-phosphate synthase large chain"/>
    <property type="match status" value="1"/>
</dbReference>
<dbReference type="FunFam" id="3.30.470.20:FF:000013">
    <property type="entry name" value="Carbamoyl-phosphate synthase large chain"/>
    <property type="match status" value="1"/>
</dbReference>
<dbReference type="FunFam" id="3.40.50.1380:FF:000004">
    <property type="entry name" value="Carbamoyl-phosphate synthase large chain"/>
    <property type="match status" value="1"/>
</dbReference>
<dbReference type="FunFam" id="3.40.50.20:FF:000001">
    <property type="entry name" value="Carbamoyl-phosphate synthase large chain"/>
    <property type="match status" value="1"/>
</dbReference>
<dbReference type="FunFam" id="3.40.50.20:FF:000003">
    <property type="entry name" value="Carbamoyl-phosphate synthase large chain"/>
    <property type="match status" value="1"/>
</dbReference>
<dbReference type="Gene3D" id="3.40.50.20">
    <property type="match status" value="2"/>
</dbReference>
<dbReference type="Gene3D" id="3.30.470.20">
    <property type="entry name" value="ATP-grasp fold, B domain"/>
    <property type="match status" value="2"/>
</dbReference>
<dbReference type="Gene3D" id="1.10.1030.10">
    <property type="entry name" value="Carbamoyl-phosphate synthetase, large subunit oligomerisation domain"/>
    <property type="match status" value="1"/>
</dbReference>
<dbReference type="Gene3D" id="3.40.50.1380">
    <property type="entry name" value="Methylglyoxal synthase-like domain"/>
    <property type="match status" value="1"/>
</dbReference>
<dbReference type="HAMAP" id="MF_01210_A">
    <property type="entry name" value="CPSase_L_chain_A"/>
    <property type="match status" value="1"/>
</dbReference>
<dbReference type="HAMAP" id="MF_01210_B">
    <property type="entry name" value="CPSase_L_chain_B"/>
    <property type="match status" value="1"/>
</dbReference>
<dbReference type="InterPro" id="IPR011761">
    <property type="entry name" value="ATP-grasp"/>
</dbReference>
<dbReference type="InterPro" id="IPR006275">
    <property type="entry name" value="CarbamoylP_synth_lsu"/>
</dbReference>
<dbReference type="InterPro" id="IPR005480">
    <property type="entry name" value="CarbamoylP_synth_lsu_oligo"/>
</dbReference>
<dbReference type="InterPro" id="IPR036897">
    <property type="entry name" value="CarbamoylP_synth_lsu_oligo_sf"/>
</dbReference>
<dbReference type="InterPro" id="IPR005479">
    <property type="entry name" value="CbamoylP_synth_lsu-like_ATP-bd"/>
</dbReference>
<dbReference type="InterPro" id="IPR005483">
    <property type="entry name" value="CbamoylP_synth_lsu_CPSase_dom"/>
</dbReference>
<dbReference type="InterPro" id="IPR011607">
    <property type="entry name" value="MGS-like_dom"/>
</dbReference>
<dbReference type="InterPro" id="IPR036914">
    <property type="entry name" value="MGS-like_dom_sf"/>
</dbReference>
<dbReference type="InterPro" id="IPR033937">
    <property type="entry name" value="MGS_CPS_CarB"/>
</dbReference>
<dbReference type="InterPro" id="IPR016185">
    <property type="entry name" value="PreATP-grasp_dom_sf"/>
</dbReference>
<dbReference type="NCBIfam" id="TIGR01369">
    <property type="entry name" value="CPSaseII_lrg"/>
    <property type="match status" value="1"/>
</dbReference>
<dbReference type="NCBIfam" id="NF003671">
    <property type="entry name" value="PRK05294.1"/>
    <property type="match status" value="1"/>
</dbReference>
<dbReference type="NCBIfam" id="NF009455">
    <property type="entry name" value="PRK12815.1"/>
    <property type="match status" value="1"/>
</dbReference>
<dbReference type="PANTHER" id="PTHR11405:SF53">
    <property type="entry name" value="CARBAMOYL-PHOSPHATE SYNTHASE [AMMONIA], MITOCHONDRIAL"/>
    <property type="match status" value="1"/>
</dbReference>
<dbReference type="PANTHER" id="PTHR11405">
    <property type="entry name" value="CARBAMOYLTRANSFERASE FAMILY MEMBER"/>
    <property type="match status" value="1"/>
</dbReference>
<dbReference type="Pfam" id="PF02786">
    <property type="entry name" value="CPSase_L_D2"/>
    <property type="match status" value="2"/>
</dbReference>
<dbReference type="Pfam" id="PF02787">
    <property type="entry name" value="CPSase_L_D3"/>
    <property type="match status" value="1"/>
</dbReference>
<dbReference type="Pfam" id="PF02142">
    <property type="entry name" value="MGS"/>
    <property type="match status" value="1"/>
</dbReference>
<dbReference type="PRINTS" id="PR00098">
    <property type="entry name" value="CPSASE"/>
</dbReference>
<dbReference type="SMART" id="SM01096">
    <property type="entry name" value="CPSase_L_D3"/>
    <property type="match status" value="1"/>
</dbReference>
<dbReference type="SMART" id="SM00851">
    <property type="entry name" value="MGS"/>
    <property type="match status" value="1"/>
</dbReference>
<dbReference type="SUPFAM" id="SSF48108">
    <property type="entry name" value="Carbamoyl phosphate synthetase, large subunit connection domain"/>
    <property type="match status" value="1"/>
</dbReference>
<dbReference type="SUPFAM" id="SSF56059">
    <property type="entry name" value="Glutathione synthetase ATP-binding domain-like"/>
    <property type="match status" value="2"/>
</dbReference>
<dbReference type="SUPFAM" id="SSF52335">
    <property type="entry name" value="Methylglyoxal synthase-like"/>
    <property type="match status" value="1"/>
</dbReference>
<dbReference type="SUPFAM" id="SSF52440">
    <property type="entry name" value="PreATP-grasp domain"/>
    <property type="match status" value="2"/>
</dbReference>
<dbReference type="PROSITE" id="PS50975">
    <property type="entry name" value="ATP_GRASP"/>
    <property type="match status" value="2"/>
</dbReference>
<dbReference type="PROSITE" id="PS00866">
    <property type="entry name" value="CPSASE_1"/>
    <property type="match status" value="2"/>
</dbReference>
<dbReference type="PROSITE" id="PS00867">
    <property type="entry name" value="CPSASE_2"/>
    <property type="match status" value="2"/>
</dbReference>
<dbReference type="PROSITE" id="PS51855">
    <property type="entry name" value="MGS"/>
    <property type="match status" value="1"/>
</dbReference>
<gene>
    <name evidence="1 13" type="primary">carB</name>
    <name type="synonym">pyrA</name>
    <name type="ordered locus">b0033</name>
    <name type="ordered locus">JW0031</name>
</gene>
<sequence length="1073" mass="117842">MPKRTDIKSILILGAGPIVIGQACEFDYSGAQACKALREEGYRVILVNSNPATIMTDPEMADATYIEPIHWEVVRKIIEKERPDAVLPTMGGQTALNCALELERQGVLEEFGVTMIGATADAIDKAEDRRRFDVAMKKIGLETARSGIAHTMEEALAVAADVGFPCIIRPSFTMGGSGGGIAYNREEFEEICARGLDLSPTKELLIDESLIGWKEYEMEVVRDKNDNCIIVCSIENFDAMGIHTGDSITVAPAQTLTDKEYQIMRNASMAVLREIGVETGGSNVQFAVNPKNGRLIVIEMNPRVSRSSALASKATGFPIAKVAAKLAVGYTLDELMNDITGGRTPASFEPSIDYVVTKIPRFNFEKFAGANDRLTTQMKSVGEVMAIGRTQQESLQKALRGLEVGATGFDPKVSLDDPEALTKIRRELKDAGADRIWYIADAFRAGLSVDGVFNLTNIDRWFLVQIEELVRLEEKVAEVGITGLNADFLRQLKRKGFADARLAKLAGVREAEIRKLRDQYDLHPVYKRVDTCAAEFATDTAYMYSTYEEECEANPSTDREKIMVLGGGPNRIGQGIEFDYCCVHASLALREDGYETIMVNCNPETVSTDYDTSDRLYFEPVTLEDVLEIVRIEKPKGVIVQYGGQTPLKLARALEAAGVPVIGTSPDAIDRAEDRERFQHAVERLKLKQPANATVTAIEMAVEKAKEIGYPLVVRPSYVLGGRAMEIVYDEADLRRYFQTAVSVSNDAPVLLDHFLDDAVEVDVDAICDGEMVLIGGIMEHIEQAGVHSGDSACSLPAYTLSQEIQDVMRQQVQKLAFELQVRGLMNVQFAVKNNEVYLIEVNPRAARTVPFVSKATGVPLAKVAARVMAGKSLAEQGVTKEVIPPYYSVKEVVLPFNKFPGVDPLLGPEMRSTGEVMGVGRTFAEAFAKAQLGSNSTMKKHGRALLSVREGDKERVVDLAAKLLKQGFELDATHGTAIVLGEAGINPRLVNKVHEGRPHIQDRIKNGEYTYIINTTSGRRAIEDSRVIRRSALQYKVHYDTTLNGGFATAMALNADATEKVISVQEMHAQIK</sequence>
<accession>P00968</accession>
<protein>
    <recommendedName>
        <fullName evidence="1">Carbamoyl phosphate synthase large chain</fullName>
        <ecNumber evidence="1 8">6.3.4.16</ecNumber>
        <ecNumber evidence="1 8">6.3.5.5</ecNumber>
    </recommendedName>
    <alternativeName>
        <fullName evidence="1">Carbamoyl phosphate synthetase ammonia chain</fullName>
    </alternativeName>
</protein>
<keyword id="KW-0002">3D-structure</keyword>
<keyword id="KW-0028">Amino-acid biosynthesis</keyword>
<keyword id="KW-0055">Arginine biosynthesis</keyword>
<keyword id="KW-0067">ATP-binding</keyword>
<keyword id="KW-0903">Direct protein sequencing</keyword>
<keyword id="KW-0436">Ligase</keyword>
<keyword id="KW-0460">Magnesium</keyword>
<keyword id="KW-0464">Manganese</keyword>
<keyword id="KW-0479">Metal-binding</keyword>
<keyword id="KW-0547">Nucleotide-binding</keyword>
<keyword id="KW-0665">Pyrimidine biosynthesis</keyword>
<keyword id="KW-1185">Reference proteome</keyword>
<keyword id="KW-0677">Repeat</keyword>
<proteinExistence type="evidence at protein level"/>
<feature type="initiator methionine" description="Removed" evidence="9">
    <location>
        <position position="1"/>
    </location>
</feature>
<feature type="chain" id="PRO_0000145004" description="Carbamoyl phosphate synthase large chain">
    <location>
        <begin position="2"/>
        <end position="1073"/>
    </location>
</feature>
<feature type="domain" description="ATP-grasp 1" evidence="1">
    <location>
        <begin position="133"/>
        <end position="328"/>
    </location>
</feature>
<feature type="domain" description="ATP-grasp 2" evidence="1">
    <location>
        <begin position="679"/>
        <end position="870"/>
    </location>
</feature>
<feature type="domain" description="MGS-like" evidence="1">
    <location>
        <begin position="937"/>
        <end position="1073"/>
    </location>
</feature>
<feature type="region of interest" description="Carboxyphosphate synthetic domain" evidence="1">
    <location>
        <begin position="2"/>
        <end position="403"/>
    </location>
</feature>
<feature type="region of interest" description="Oligomerization domain" evidence="1">
    <location>
        <begin position="404"/>
        <end position="553"/>
    </location>
</feature>
<feature type="region of interest" description="Carbamoyl phosphate synthetic domain" evidence="1">
    <location>
        <begin position="554"/>
        <end position="936"/>
    </location>
</feature>
<feature type="region of interest" description="Allosteric domain" evidence="1">
    <location>
        <begin position="937"/>
        <end position="1073"/>
    </location>
</feature>
<feature type="binding site" evidence="1 2 15 17 18 19 20 21 22 23 24">
    <location>
        <position position="129"/>
    </location>
    <ligand>
        <name>ATP</name>
        <dbReference type="ChEBI" id="CHEBI:30616"/>
        <label>1</label>
    </ligand>
</feature>
<feature type="binding site" evidence="1 2 15 17 18 19 20 21 22 23 24">
    <location>
        <position position="169"/>
    </location>
    <ligand>
        <name>ATP</name>
        <dbReference type="ChEBI" id="CHEBI:30616"/>
        <label>1</label>
    </ligand>
</feature>
<feature type="binding site" evidence="1 2 15 17 18 19 20 21 22 23 24">
    <location>
        <position position="175"/>
    </location>
    <ligand>
        <name>ATP</name>
        <dbReference type="ChEBI" id="CHEBI:30616"/>
        <label>1</label>
    </ligand>
</feature>
<feature type="binding site" evidence="1 2 15 17 18 19 20 21 22 23 24">
    <location>
        <position position="176"/>
    </location>
    <ligand>
        <name>ATP</name>
        <dbReference type="ChEBI" id="CHEBI:30616"/>
        <label>1</label>
    </ligand>
</feature>
<feature type="binding site" evidence="1 2 15 17 18 19 20 21 22 23 24">
    <location>
        <position position="208"/>
    </location>
    <ligand>
        <name>ATP</name>
        <dbReference type="ChEBI" id="CHEBI:30616"/>
        <label>1</label>
    </ligand>
</feature>
<feature type="binding site" evidence="1 2 15 17 18 19 20 21 22 23 24">
    <location>
        <position position="210"/>
    </location>
    <ligand>
        <name>ATP</name>
        <dbReference type="ChEBI" id="CHEBI:30616"/>
        <label>1</label>
    </ligand>
</feature>
<feature type="binding site" evidence="1 2 15 17 18 19 20 21 22 23 24">
    <location>
        <position position="215"/>
    </location>
    <ligand>
        <name>ATP</name>
        <dbReference type="ChEBI" id="CHEBI:30616"/>
        <label>1</label>
    </ligand>
</feature>
<feature type="binding site" evidence="1 2 15 17 18 19 20 21 22 23 24">
    <location>
        <position position="241"/>
    </location>
    <ligand>
        <name>ATP</name>
        <dbReference type="ChEBI" id="CHEBI:30616"/>
        <label>1</label>
    </ligand>
</feature>
<feature type="binding site" evidence="1 2 15 17 18 19 20 21 22 23 24">
    <location>
        <position position="242"/>
    </location>
    <ligand>
        <name>ATP</name>
        <dbReference type="ChEBI" id="CHEBI:30616"/>
        <label>1</label>
    </ligand>
</feature>
<feature type="binding site" evidence="1 2 15 17 18 19 20 21 22 23 24">
    <location>
        <position position="243"/>
    </location>
    <ligand>
        <name>ATP</name>
        <dbReference type="ChEBI" id="CHEBI:30616"/>
        <label>1</label>
    </ligand>
</feature>
<feature type="binding site" evidence="1 2 15 17 18 19 20 21 22 23 24">
    <location>
        <position position="285"/>
    </location>
    <ligand>
        <name>ATP</name>
        <dbReference type="ChEBI" id="CHEBI:30616"/>
        <label>1</label>
    </ligand>
</feature>
<feature type="binding site" evidence="1">
    <location>
        <position position="285"/>
    </location>
    <ligand>
        <name>Mg(2+)</name>
        <dbReference type="ChEBI" id="CHEBI:18420"/>
        <label>1</label>
    </ligand>
</feature>
<feature type="binding site" evidence="1 4 19">
    <location>
        <position position="285"/>
    </location>
    <ligand>
        <name>Mn(2+)</name>
        <dbReference type="ChEBI" id="CHEBI:29035"/>
        <label>1</label>
    </ligand>
</feature>
<feature type="binding site" evidence="1 2 15 17 18 19 20 21 22 23 24">
    <location>
        <position position="299"/>
    </location>
    <ligand>
        <name>ATP</name>
        <dbReference type="ChEBI" id="CHEBI:30616"/>
        <label>1</label>
    </ligand>
</feature>
<feature type="binding site" evidence="1">
    <location>
        <position position="299"/>
    </location>
    <ligand>
        <name>Mg(2+)</name>
        <dbReference type="ChEBI" id="CHEBI:18420"/>
        <label>1</label>
    </ligand>
</feature>
<feature type="binding site" evidence="1">
    <location>
        <position position="299"/>
    </location>
    <ligand>
        <name>Mg(2+)</name>
        <dbReference type="ChEBI" id="CHEBI:18420"/>
        <label>2</label>
    </ligand>
</feature>
<feature type="binding site" evidence="1 2 3 4 5 11 19">
    <location>
        <position position="299"/>
    </location>
    <ligand>
        <name>Mn(2+)</name>
        <dbReference type="ChEBI" id="CHEBI:29035"/>
        <label>1</label>
    </ligand>
</feature>
<feature type="binding site" evidence="1 2 3 4 5 11 19">
    <location>
        <position position="299"/>
    </location>
    <ligand>
        <name>Mn(2+)</name>
        <dbReference type="ChEBI" id="CHEBI:29035"/>
        <label>2</label>
    </ligand>
</feature>
<feature type="binding site" evidence="1">
    <location>
        <position position="301"/>
    </location>
    <ligand>
        <name>Mg(2+)</name>
        <dbReference type="ChEBI" id="CHEBI:18420"/>
        <label>2</label>
    </ligand>
</feature>
<feature type="binding site" evidence="1 2 3 4 5 11 19">
    <location>
        <position position="301"/>
    </location>
    <ligand>
        <name>Mn(2+)</name>
        <dbReference type="ChEBI" id="CHEBI:29035"/>
        <label>2</label>
    </ligand>
</feature>
<feature type="binding site" evidence="1 2 15 17 18 19 20 21 22 23 24">
    <location>
        <position position="715"/>
    </location>
    <ligand>
        <name>ATP</name>
        <dbReference type="ChEBI" id="CHEBI:30616"/>
        <label>2</label>
    </ligand>
</feature>
<feature type="binding site" evidence="1 2 15 17 18 19 20 21 22 23 24">
    <location>
        <position position="754"/>
    </location>
    <ligand>
        <name>ATP</name>
        <dbReference type="ChEBI" id="CHEBI:30616"/>
        <label>2</label>
    </ligand>
</feature>
<feature type="binding site" evidence="1 2 15 17 18 19 20 21 22 23 24">
    <location>
        <position position="756"/>
    </location>
    <ligand>
        <name>ATP</name>
        <dbReference type="ChEBI" id="CHEBI:30616"/>
        <label>2</label>
    </ligand>
</feature>
<feature type="binding site" evidence="1 2 15 17 18 19 20 21 22 23 24">
    <location>
        <position position="761"/>
    </location>
    <ligand>
        <name>ATP</name>
        <dbReference type="ChEBI" id="CHEBI:30616"/>
        <label>2</label>
    </ligand>
</feature>
<feature type="binding site" evidence="1 2 15 17 18 19 20 21 22 23 24">
    <location>
        <position position="786"/>
    </location>
    <ligand>
        <name>ATP</name>
        <dbReference type="ChEBI" id="CHEBI:30616"/>
        <label>2</label>
    </ligand>
</feature>
<feature type="binding site" evidence="1 2 15 17 18 19 20 21 22 23 24">
    <location>
        <position position="787"/>
    </location>
    <ligand>
        <name>ATP</name>
        <dbReference type="ChEBI" id="CHEBI:30616"/>
        <label>2</label>
    </ligand>
</feature>
<feature type="binding site" evidence="1 2 15 17 18 19 20 21 22 23 24">
    <location>
        <position position="788"/>
    </location>
    <ligand>
        <name>ATP</name>
        <dbReference type="ChEBI" id="CHEBI:30616"/>
        <label>2</label>
    </ligand>
</feature>
<feature type="binding site" evidence="1 2 15 17 18 19 20 21 22 23 24">
    <location>
        <position position="789"/>
    </location>
    <ligand>
        <name>ATP</name>
        <dbReference type="ChEBI" id="CHEBI:30616"/>
        <label>2</label>
    </ligand>
</feature>
<feature type="binding site" evidence="1 2 15 17 18 19 20 21 22 23 24">
    <location>
        <position position="829"/>
    </location>
    <ligand>
        <name>ATP</name>
        <dbReference type="ChEBI" id="CHEBI:30616"/>
        <label>2</label>
    </ligand>
</feature>
<feature type="binding site" evidence="1">
    <location>
        <position position="829"/>
    </location>
    <ligand>
        <name>Mg(2+)</name>
        <dbReference type="ChEBI" id="CHEBI:18420"/>
        <label>3</label>
    </ligand>
</feature>
<feature type="binding site" evidence="1 4 11 19">
    <location>
        <position position="829"/>
    </location>
    <ligand>
        <name>Mn(2+)</name>
        <dbReference type="ChEBI" id="CHEBI:29035"/>
        <label>3</label>
    </ligand>
</feature>
<feature type="binding site" evidence="1 2 15 17 18 19 20 21 22 23 24">
    <location>
        <position position="841"/>
    </location>
    <ligand>
        <name>ATP</name>
        <dbReference type="ChEBI" id="CHEBI:30616"/>
        <label>2</label>
    </ligand>
</feature>
<feature type="binding site" evidence="1">
    <location>
        <position position="841"/>
    </location>
    <ligand>
        <name>Mg(2+)</name>
        <dbReference type="ChEBI" id="CHEBI:18420"/>
        <label>3</label>
    </ligand>
</feature>
<feature type="binding site" evidence="1">
    <location>
        <position position="841"/>
    </location>
    <ligand>
        <name>Mg(2+)</name>
        <dbReference type="ChEBI" id="CHEBI:18420"/>
        <label>4</label>
    </ligand>
</feature>
<feature type="binding site" evidence="1 2 3 4 11 19">
    <location>
        <position position="841"/>
    </location>
    <ligand>
        <name>Mn(2+)</name>
        <dbReference type="ChEBI" id="CHEBI:29035"/>
        <label>3</label>
    </ligand>
</feature>
<feature type="binding site" evidence="1 2 3 4 11 19">
    <location>
        <position position="841"/>
    </location>
    <ligand>
        <name>Mn(2+)</name>
        <dbReference type="ChEBI" id="CHEBI:29035"/>
        <label>4</label>
    </ligand>
</feature>
<feature type="binding site" evidence="1">
    <location>
        <position position="843"/>
    </location>
    <ligand>
        <name>Mg(2+)</name>
        <dbReference type="ChEBI" id="CHEBI:18420"/>
        <label>4</label>
    </ligand>
</feature>
<feature type="binding site" evidence="1 2 3">
    <location>
        <position position="843"/>
    </location>
    <ligand>
        <name>Mn(2+)</name>
        <dbReference type="ChEBI" id="CHEBI:29035"/>
        <label>4</label>
    </ligand>
</feature>
<feature type="strand" evidence="25">
    <location>
        <begin position="9"/>
        <end position="13"/>
    </location>
</feature>
<feature type="helix" evidence="25">
    <location>
        <begin position="25"/>
        <end position="40"/>
    </location>
</feature>
<feature type="strand" evidence="25">
    <location>
        <begin position="43"/>
        <end position="47"/>
    </location>
</feature>
<feature type="helix" evidence="25">
    <location>
        <begin position="54"/>
        <end position="56"/>
    </location>
</feature>
<feature type="helix" evidence="25">
    <location>
        <begin position="58"/>
        <end position="60"/>
    </location>
</feature>
<feature type="strand" evidence="25">
    <location>
        <begin position="61"/>
        <end position="65"/>
    </location>
</feature>
<feature type="helix" evidence="25">
    <location>
        <begin position="71"/>
        <end position="81"/>
    </location>
</feature>
<feature type="strand" evidence="25">
    <location>
        <begin position="84"/>
        <end position="87"/>
    </location>
</feature>
<feature type="strand" evidence="25">
    <location>
        <begin position="89"/>
        <end position="91"/>
    </location>
</feature>
<feature type="helix" evidence="25">
    <location>
        <begin position="92"/>
        <end position="104"/>
    </location>
</feature>
<feature type="helix" evidence="25">
    <location>
        <begin position="107"/>
        <end position="111"/>
    </location>
</feature>
<feature type="helix" evidence="25">
    <location>
        <begin position="120"/>
        <end position="127"/>
    </location>
</feature>
<feature type="helix" evidence="25">
    <location>
        <begin position="129"/>
        <end position="138"/>
    </location>
</feature>
<feature type="strand" evidence="25">
    <location>
        <begin position="145"/>
        <end position="151"/>
    </location>
</feature>
<feature type="helix" evidence="25">
    <location>
        <begin position="152"/>
        <end position="162"/>
    </location>
</feature>
<feature type="strand" evidence="25">
    <location>
        <begin position="164"/>
        <end position="170"/>
    </location>
</feature>
<feature type="turn" evidence="25">
    <location>
        <begin position="175"/>
        <end position="178"/>
    </location>
</feature>
<feature type="strand" evidence="25">
    <location>
        <begin position="180"/>
        <end position="184"/>
    </location>
</feature>
<feature type="helix" evidence="25">
    <location>
        <begin position="185"/>
        <end position="198"/>
    </location>
</feature>
<feature type="strand" evidence="25">
    <location>
        <begin position="204"/>
        <end position="208"/>
    </location>
</feature>
<feature type="strand" evidence="25">
    <location>
        <begin position="213"/>
        <end position="222"/>
    </location>
</feature>
<feature type="strand" evidence="25">
    <location>
        <begin position="228"/>
        <end position="238"/>
    </location>
</feature>
<feature type="helix" evidence="25">
    <location>
        <begin position="244"/>
        <end position="246"/>
    </location>
</feature>
<feature type="strand" evidence="25">
    <location>
        <begin position="249"/>
        <end position="252"/>
    </location>
</feature>
<feature type="helix" evidence="25">
    <location>
        <begin position="258"/>
        <end position="275"/>
    </location>
</feature>
<feature type="strand" evidence="25">
    <location>
        <begin position="279"/>
        <end position="288"/>
    </location>
</feature>
<feature type="turn" evidence="25">
    <location>
        <begin position="290"/>
        <end position="292"/>
    </location>
</feature>
<feature type="strand" evidence="25">
    <location>
        <begin position="295"/>
        <end position="303"/>
    </location>
</feature>
<feature type="helix" evidence="25">
    <location>
        <begin position="306"/>
        <end position="315"/>
    </location>
</feature>
<feature type="helix" evidence="25">
    <location>
        <begin position="319"/>
        <end position="327"/>
    </location>
</feature>
<feature type="helix" evidence="25">
    <location>
        <begin position="332"/>
        <end position="334"/>
    </location>
</feature>
<feature type="turn" evidence="25">
    <location>
        <begin position="338"/>
        <end position="342"/>
    </location>
</feature>
<feature type="strand" evidence="25">
    <location>
        <begin position="344"/>
        <end position="346"/>
    </location>
</feature>
<feature type="strand" evidence="25">
    <location>
        <begin position="353"/>
        <end position="361"/>
    </location>
</feature>
<feature type="helix" evidence="25">
    <location>
        <begin position="364"/>
        <end position="366"/>
    </location>
</feature>
<feature type="strand" evidence="25">
    <location>
        <begin position="382"/>
        <end position="390"/>
    </location>
</feature>
<feature type="helix" evidence="25">
    <location>
        <begin position="391"/>
        <end position="401"/>
    </location>
</feature>
<feature type="strand" evidence="25">
    <location>
        <begin position="402"/>
        <end position="405"/>
    </location>
</feature>
<feature type="strand" evidence="25">
    <location>
        <begin position="407"/>
        <end position="409"/>
    </location>
</feature>
<feature type="helix" evidence="25">
    <location>
        <begin position="420"/>
        <end position="429"/>
    </location>
</feature>
<feature type="helix" evidence="25">
    <location>
        <begin position="435"/>
        <end position="444"/>
    </location>
</feature>
<feature type="helix" evidence="25">
    <location>
        <begin position="449"/>
        <end position="456"/>
    </location>
</feature>
<feature type="helix" evidence="25">
    <location>
        <begin position="460"/>
        <end position="479"/>
    </location>
</feature>
<feature type="helix" evidence="25">
    <location>
        <begin position="481"/>
        <end position="483"/>
    </location>
</feature>
<feature type="helix" evidence="25">
    <location>
        <begin position="486"/>
        <end position="494"/>
    </location>
</feature>
<feature type="helix" evidence="25">
    <location>
        <begin position="499"/>
        <end position="505"/>
    </location>
</feature>
<feature type="helix" evidence="25">
    <location>
        <begin position="510"/>
        <end position="519"/>
    </location>
</feature>
<feature type="strand" evidence="25">
    <location>
        <begin position="525"/>
        <end position="528"/>
    </location>
</feature>
<feature type="strand" evidence="25">
    <location>
        <begin position="541"/>
        <end position="547"/>
    </location>
</feature>
<feature type="strand" evidence="25">
    <location>
        <begin position="557"/>
        <end position="559"/>
    </location>
</feature>
<feature type="strand" evidence="25">
    <location>
        <begin position="561"/>
        <end position="565"/>
    </location>
</feature>
<feature type="helix" evidence="25">
    <location>
        <begin position="576"/>
        <end position="591"/>
    </location>
</feature>
<feature type="strand" evidence="25">
    <location>
        <begin position="595"/>
        <end position="599"/>
    </location>
</feature>
<feature type="helix" evidence="27">
    <location>
        <begin position="606"/>
        <end position="608"/>
    </location>
</feature>
<feature type="strand" evidence="25">
    <location>
        <begin position="612"/>
        <end position="617"/>
    </location>
</feature>
<feature type="helix" evidence="25">
    <location>
        <begin position="623"/>
        <end position="633"/>
    </location>
</feature>
<feature type="strand" evidence="25">
    <location>
        <begin position="636"/>
        <end position="639"/>
    </location>
</feature>
<feature type="strand" evidence="25">
    <location>
        <begin position="641"/>
        <end position="643"/>
    </location>
</feature>
<feature type="helix" evidence="25">
    <location>
        <begin position="645"/>
        <end position="648"/>
    </location>
</feature>
<feature type="helix" evidence="25">
    <location>
        <begin position="651"/>
        <end position="656"/>
    </location>
</feature>
<feature type="strand" evidence="27">
    <location>
        <begin position="661"/>
        <end position="664"/>
    </location>
</feature>
<feature type="helix" evidence="25">
    <location>
        <begin position="666"/>
        <end position="673"/>
    </location>
</feature>
<feature type="helix" evidence="25">
    <location>
        <begin position="675"/>
        <end position="685"/>
    </location>
</feature>
<feature type="strand" evidence="25">
    <location>
        <begin position="692"/>
        <end position="694"/>
    </location>
</feature>
<feature type="helix" evidence="25">
    <location>
        <begin position="698"/>
        <end position="708"/>
    </location>
</feature>
<feature type="strand" evidence="25">
    <location>
        <begin position="710"/>
        <end position="715"/>
    </location>
</feature>
<feature type="turn" evidence="26">
    <location>
        <begin position="721"/>
        <end position="724"/>
    </location>
</feature>
<feature type="strand" evidence="25">
    <location>
        <begin position="725"/>
        <end position="728"/>
    </location>
</feature>
<feature type="helix" evidence="25">
    <location>
        <begin position="731"/>
        <end position="740"/>
    </location>
</feature>
<feature type="strand" evidence="25">
    <location>
        <begin position="751"/>
        <end position="754"/>
    </location>
</feature>
<feature type="strand" evidence="25">
    <location>
        <begin position="760"/>
        <end position="768"/>
    </location>
</feature>
<feature type="strand" evidence="25">
    <location>
        <begin position="773"/>
        <end position="783"/>
    </location>
</feature>
<feature type="helix" evidence="25">
    <location>
        <begin position="789"/>
        <end position="791"/>
    </location>
</feature>
<feature type="strand" evidence="25">
    <location>
        <begin position="794"/>
        <end position="797"/>
    </location>
</feature>
<feature type="strand" evidence="28">
    <location>
        <begin position="799"/>
        <end position="801"/>
    </location>
</feature>
<feature type="helix" evidence="25">
    <location>
        <begin position="803"/>
        <end position="819"/>
    </location>
</feature>
<feature type="strand" evidence="25">
    <location>
        <begin position="824"/>
        <end position="832"/>
    </location>
</feature>
<feature type="strand" evidence="25">
    <location>
        <begin position="837"/>
        <end position="843"/>
    </location>
</feature>
<feature type="helix" evidence="25">
    <location>
        <begin position="850"/>
        <end position="857"/>
    </location>
</feature>
<feature type="helix" evidence="25">
    <location>
        <begin position="861"/>
        <end position="869"/>
    </location>
</feature>
<feature type="helix" evidence="25">
    <location>
        <begin position="874"/>
        <end position="877"/>
    </location>
</feature>
<feature type="strand" evidence="25">
    <location>
        <begin position="886"/>
        <end position="894"/>
    </location>
</feature>
<feature type="helix" evidence="25">
    <location>
        <begin position="896"/>
        <end position="899"/>
    </location>
</feature>
<feature type="strand" evidence="25">
    <location>
        <begin position="915"/>
        <end position="923"/>
    </location>
</feature>
<feature type="helix" evidence="25">
    <location>
        <begin position="924"/>
        <end position="934"/>
    </location>
</feature>
<feature type="strand" evidence="25">
    <location>
        <begin position="941"/>
        <end position="948"/>
    </location>
</feature>
<feature type="helix" evidence="25">
    <location>
        <begin position="951"/>
        <end position="954"/>
    </location>
</feature>
<feature type="helix" evidence="25">
    <location>
        <begin position="957"/>
        <end position="966"/>
    </location>
</feature>
<feature type="strand" evidence="25">
    <location>
        <begin position="970"/>
        <end position="973"/>
    </location>
</feature>
<feature type="helix" evidence="25">
    <location>
        <begin position="975"/>
        <end position="982"/>
    </location>
</feature>
<feature type="turn" evidence="25">
    <location>
        <begin position="983"/>
        <end position="985"/>
    </location>
</feature>
<feature type="strand" evidence="27">
    <location>
        <begin position="989"/>
        <end position="992"/>
    </location>
</feature>
<feature type="turn" evidence="25">
    <location>
        <begin position="994"/>
        <end position="996"/>
    </location>
</feature>
<feature type="strand" evidence="25">
    <location>
        <begin position="998"/>
        <end position="1000"/>
    </location>
</feature>
<feature type="helix" evidence="25">
    <location>
        <begin position="1001"/>
        <end position="1007"/>
    </location>
</feature>
<feature type="strand" evidence="25">
    <location>
        <begin position="1011"/>
        <end position="1015"/>
    </location>
</feature>
<feature type="helix" evidence="25">
    <location>
        <begin position="1020"/>
        <end position="1025"/>
    </location>
</feature>
<feature type="helix" evidence="25">
    <location>
        <begin position="1027"/>
        <end position="1035"/>
    </location>
</feature>
<feature type="strand" evidence="25">
    <location>
        <begin position="1039"/>
        <end position="1043"/>
    </location>
</feature>
<feature type="helix" evidence="25">
    <location>
        <begin position="1044"/>
        <end position="1054"/>
    </location>
</feature>
<feature type="turn" evidence="26">
    <location>
        <begin position="1058"/>
        <end position="1060"/>
    </location>
</feature>
<feature type="helix" evidence="25">
    <location>
        <begin position="1065"/>
        <end position="1070"/>
    </location>
</feature>
<name>CARB_ECOLI</name>
<organism>
    <name type="scientific">Escherichia coli (strain K12)</name>
    <dbReference type="NCBI Taxonomy" id="83333"/>
    <lineage>
        <taxon>Bacteria</taxon>
        <taxon>Pseudomonadati</taxon>
        <taxon>Pseudomonadota</taxon>
        <taxon>Gammaproteobacteria</taxon>
        <taxon>Enterobacterales</taxon>
        <taxon>Enterobacteriaceae</taxon>
        <taxon>Escherichia</taxon>
    </lineage>
</organism>
<comment type="function">
    <text evidence="1 6 7 8 12">Large subunit of the glutamine-dependent carbamoyl phosphate synthetase (CPSase). CPSase catalyzes the formation of carbamoyl phosphate from the ammonia moiety of glutamine, carbonate, and phosphate donated by ATP, constituting the first step of 2 biosynthetic pathways, one leading to arginine and/or urea and the other to pyrimidine nucleotides. The large subunit (synthetase) binds the substrates ammonia (free or transferred from glutamine from the small subunit), hydrogencarbonate and ATP and carries out an ATP-coupled ligase reaction, activating hydrogencarbonate by forming carboxy phosphate which reacts with ammonia to form carbamoyl phosphate.</text>
</comment>
<comment type="catalytic activity">
    <reaction evidence="1 8">
        <text>hydrogencarbonate + L-glutamine + 2 ATP + H2O = carbamoyl phosphate + L-glutamate + 2 ADP + phosphate + 2 H(+)</text>
        <dbReference type="Rhea" id="RHEA:18633"/>
        <dbReference type="ChEBI" id="CHEBI:15377"/>
        <dbReference type="ChEBI" id="CHEBI:15378"/>
        <dbReference type="ChEBI" id="CHEBI:17544"/>
        <dbReference type="ChEBI" id="CHEBI:29985"/>
        <dbReference type="ChEBI" id="CHEBI:30616"/>
        <dbReference type="ChEBI" id="CHEBI:43474"/>
        <dbReference type="ChEBI" id="CHEBI:58228"/>
        <dbReference type="ChEBI" id="CHEBI:58359"/>
        <dbReference type="ChEBI" id="CHEBI:456216"/>
        <dbReference type="EC" id="6.3.5.5"/>
    </reaction>
</comment>
<comment type="catalytic activity">
    <molecule>Carbamoyl phosphate synthase large chain</molecule>
    <reaction evidence="1 8">
        <text>hydrogencarbonate + NH4(+) + 2 ATP = carbamoyl phosphate + 2 ADP + phosphate + 2 H(+)</text>
        <dbReference type="Rhea" id="RHEA:18029"/>
        <dbReference type="ChEBI" id="CHEBI:15378"/>
        <dbReference type="ChEBI" id="CHEBI:17544"/>
        <dbReference type="ChEBI" id="CHEBI:28938"/>
        <dbReference type="ChEBI" id="CHEBI:30616"/>
        <dbReference type="ChEBI" id="CHEBI:43474"/>
        <dbReference type="ChEBI" id="CHEBI:58228"/>
        <dbReference type="ChEBI" id="CHEBI:456216"/>
        <dbReference type="EC" id="6.3.4.16"/>
    </reaction>
</comment>
<comment type="cofactor">
    <cofactor evidence="1">
        <name>Mg(2+)</name>
        <dbReference type="ChEBI" id="CHEBI:18420"/>
    </cofactor>
    <cofactor evidence="1 4">
        <name>Mn(2+)</name>
        <dbReference type="ChEBI" id="CHEBI:29035"/>
    </cofactor>
    <text evidence="1 4">Binds 4 Mg(2+) or Mn(2+) ions per subunit.</text>
</comment>
<comment type="pathway">
    <text evidence="1 14">Amino-acid biosynthesis; L-arginine biosynthesis; carbamoyl phosphate from bicarbonate: step 1/1.</text>
</comment>
<comment type="pathway">
    <text evidence="1 14">Pyrimidine metabolism; UMP biosynthesis via de novo pathway; (S)-dihydroorotate from bicarbonate: step 1/3.</text>
</comment>
<comment type="subunit">
    <text evidence="1 8">Composed of two chains; the small (or glutamine) chain promotes the hydrolysis of glutamine to ammonia, which is used by the large (or ammonia) chain to synthesize carbamoyl phosphate. Tetramer of heterodimers (alpha,beta)4.</text>
</comment>
<comment type="interaction">
    <interactant intactId="EBI-546118">
        <id>P00968</id>
    </interactant>
    <interactant intactId="EBI-546107">
        <id>P0A6F1</id>
        <label>carA</label>
    </interactant>
    <organismsDiffer>false</organismsDiffer>
    <experiments>14</experiments>
</comment>
<comment type="domain">
    <text evidence="1 10">The large subunit is composed of 2 ATP-grasp domains that are involved in binding the 2 ATP molecules needed for carbamoyl phosphate synthesis. The N-terminal ATP-grasp domain (referred to as the carboxyphosphate synthetic component) catalyzes the ATP-dependent phosphorylation of hydrogencarbonate to carboxyphosphate and the subsequent nucleophilic attack by ammonia to form a carbamate intermediate. The C-terminal ATP-grasp domain (referred to as the carbamoyl phosphate synthetic component) then catalyzes the phosphorylation of carbamate with the second ATP to form the end product carbamoyl phosphate. The reactive and unstable enzyme intermediates are sequentially channeled from one active site to the next through the interior of the protein over a distance of at least 96 A.</text>
</comment>
<comment type="similarity">
    <text evidence="1">Belongs to the CarB family.</text>
</comment>
<reference key="1">
    <citation type="journal article" date="1983" name="Proc. Natl. Acad. Sci. U.S.A.">
        <title>The carB gene of Escherichia coli: a duplicated gene coding for the large subunit of carbamoyl-phosphate synthetase.</title>
        <authorList>
            <person name="Nyunoya H."/>
            <person name="Lusty C.J."/>
        </authorList>
    </citation>
    <scope>NUCLEOTIDE SEQUENCE [GENOMIC DNA]</scope>
    <scope>PROTEIN SEQUENCE OF 2-2</scope>
    <source>
        <strain>K12</strain>
    </source>
</reference>
<reference key="2">
    <citation type="journal article" date="1984" name="Proc. Natl. Acad. Sci. U.S.A.">
        <title>Multiple regulatory signals in the control region of the Escherichia coli carAB operon.</title>
        <authorList>
            <person name="Bouvier J."/>
            <person name="Patte J.-C."/>
            <person name="Stragier P."/>
        </authorList>
    </citation>
    <scope>NUCLEOTIDE SEQUENCE [GENOMIC DNA]</scope>
</reference>
<reference key="3">
    <citation type="journal article" date="1992" name="Nucleic Acids Res.">
        <title>Systematic sequencing of the Escherichia coli genome: analysis of the 0-2.4 min region.</title>
        <authorList>
            <person name="Yura T."/>
            <person name="Mori H."/>
            <person name="Nagai H."/>
            <person name="Nagata T."/>
            <person name="Ishihama A."/>
            <person name="Fujita N."/>
            <person name="Isono K."/>
            <person name="Mizobuchi K."/>
            <person name="Nakata A."/>
        </authorList>
    </citation>
    <scope>NUCLEOTIDE SEQUENCE [LARGE SCALE GENOMIC DNA]</scope>
    <source>
        <strain>K12</strain>
    </source>
</reference>
<reference key="4">
    <citation type="journal article" date="1997" name="Science">
        <title>The complete genome sequence of Escherichia coli K-12.</title>
        <authorList>
            <person name="Blattner F.R."/>
            <person name="Plunkett G. III"/>
            <person name="Bloch C.A."/>
            <person name="Perna N.T."/>
            <person name="Burland V."/>
            <person name="Riley M."/>
            <person name="Collado-Vides J."/>
            <person name="Glasner J.D."/>
            <person name="Rode C.K."/>
            <person name="Mayhew G.F."/>
            <person name="Gregor J."/>
            <person name="Davis N.W."/>
            <person name="Kirkpatrick H.A."/>
            <person name="Goeden M.A."/>
            <person name="Rose D.J."/>
            <person name="Mau B."/>
            <person name="Shao Y."/>
        </authorList>
    </citation>
    <scope>NUCLEOTIDE SEQUENCE [LARGE SCALE GENOMIC DNA]</scope>
    <source>
        <strain>K12 / MG1655 / ATCC 47076</strain>
    </source>
</reference>
<reference key="5">
    <citation type="journal article" date="2006" name="Mol. Syst. Biol.">
        <title>Highly accurate genome sequences of Escherichia coli K-12 strains MG1655 and W3110.</title>
        <authorList>
            <person name="Hayashi K."/>
            <person name="Morooka N."/>
            <person name="Yamamoto Y."/>
            <person name="Fujita K."/>
            <person name="Isono K."/>
            <person name="Choi S."/>
            <person name="Ohtsubo E."/>
            <person name="Baba T."/>
            <person name="Wanner B.L."/>
            <person name="Mori H."/>
            <person name="Horiuchi T."/>
        </authorList>
    </citation>
    <scope>NUCLEOTIDE SEQUENCE [LARGE SCALE GENOMIC DNA]</scope>
    <source>
        <strain>K12 / W3110 / ATCC 27325 / DSM 5911</strain>
    </source>
</reference>
<reference key="6">
    <citation type="journal article" date="1984" name="Proc. Natl. Acad. Sci. U.S.A.">
        <title>DNA sequence of the carA gene and the control region of carAB: tandem promoters, respectively controlled by arginine and the pyrimidines, regulate the synthesis of carbamoyl-phosphate synthetase in Escherichia coli K-12.</title>
        <authorList>
            <person name="Piette J."/>
            <person name="Nyunoya H."/>
            <person name="Lusty C.J."/>
            <person name="Cunin R."/>
            <person name="Weyens G."/>
            <person name="Crabeel M."/>
            <person name="Charlier D.R.M."/>
            <person name="Glansdorff N."/>
            <person name="Pierard A."/>
        </authorList>
    </citation>
    <scope>NUCLEOTIDE SEQUENCE [GENOMIC DNA] OF 1-7</scope>
</reference>
<reference key="7">
    <citation type="journal article" date="1971" name="Proc. Natl. Acad. Sci. U.S.A.">
        <title>Reversible dissociation of carbamyl phosphate synthetase into a regulated synthesis subunit and a subunit required for glutamine utilization.</title>
        <authorList>
            <person name="Trotta P.P."/>
            <person name="Burt M.E."/>
            <person name="Haschemeyer R.H."/>
            <person name="Meister A."/>
        </authorList>
    </citation>
    <scope>FUNCTION</scope>
    <scope>CATALYTIC ACTIVITY</scope>
    <scope>SUBUNIT</scope>
</reference>
<reference key="8">
    <citation type="book" date="1973" name="The Enzymes of Glutamine Metabolism">
        <title>A comparison of the organization of carbamylphosphate synthesis in Saccharomyces cerevisiae and Escherichia coli, based on genetical and biochemical evidences.</title>
        <editorList>
            <person name="Prusiner S.B."/>
            <person name="Stadtman E.R."/>
        </editorList>
        <authorList>
            <person name="Pierard A."/>
            <person name="Grenson M."/>
            <person name="Glansdorff N."/>
            <person name="Wiame J.M."/>
        </authorList>
    </citation>
    <scope>FUNCTION</scope>
    <scope>PATHWAY</scope>
</reference>
<reference key="9">
    <citation type="journal article" date="1985" name="Methods Enzymol.">
        <title>Carbamyl phosphate synthetase (glutamine-utilizing) from Escherichia coli.</title>
        <authorList>
            <person name="Kaseman D.S."/>
            <person name="Meister A."/>
        </authorList>
    </citation>
    <scope>FUNCTION</scope>
</reference>
<reference key="10">
    <citation type="journal article" date="1989" name="Adv. Enzymol. Relat. Areas Mol. Biol.">
        <title>Mechanism and regulation of the glutamine-dependent carbamyl phosphate synthetase of Escherichia coli.</title>
        <authorList>
            <person name="Meister A."/>
        </authorList>
    </citation>
    <scope>FUNCTION</scope>
</reference>
<reference key="11">
    <citation type="journal article" date="1997" name="Electrophoresis">
        <title>Escherichia coli proteome analysis using the gene-protein database.</title>
        <authorList>
            <person name="VanBogelen R.A."/>
            <person name="Abshire K.Z."/>
            <person name="Moldover B."/>
            <person name="Olson E.R."/>
            <person name="Neidhardt F.C."/>
        </authorList>
    </citation>
    <scope>IDENTIFICATION BY 2D-GEL</scope>
</reference>
<reference key="12">
    <citation type="journal article" date="1997" name="Biochemistry">
        <title>Structure of carbamoyl phosphate synthetase: a journey of 96 A from substrate to product.</title>
        <authorList>
            <person name="Thoden J.B."/>
            <person name="Holden H.M."/>
            <person name="Wesenberg G."/>
            <person name="Raushel F.M."/>
            <person name="Rayment I."/>
        </authorList>
    </citation>
    <scope>X-RAY CRYSTALLOGRAPHY (2.1 ANGSTROMS)</scope>
</reference>
<reference key="13">
    <citation type="journal article" date="1998" name="Biochemistry">
        <title>Carbamoyl phosphate synthetase: caught in the act of glutamine hydrolysis.</title>
        <authorList>
            <person name="Thoden J.B."/>
            <person name="Miran S.G."/>
            <person name="Phillips J.C."/>
            <person name="Howard A.J."/>
            <person name="Raushel F.M."/>
            <person name="Holden H.M."/>
        </authorList>
    </citation>
    <scope>X-RAY CRYSTALLOGRAPHY (1.8 ANGSTROMS) IN COMPLEX WITH ADP AND MANGANESE</scope>
</reference>
<reference key="14">
    <citation type="journal article" date="1999" name="Acta Crystallogr. D">
        <title>The structure of carbamoyl phosphate synthetase determined to 2.1-A resolution.</title>
        <authorList>
            <person name="Thoden J.B."/>
            <person name="Raushel F.M."/>
            <person name="Benning M.M."/>
            <person name="Rayment I."/>
            <person name="Holden H.M."/>
        </authorList>
    </citation>
    <scope>X-RAY CRYSTALLOGRAPHY (2.1 ANGSTROMS) IN COMPLEX WITH ADP AND MANGANESE</scope>
</reference>
<reference evidence="16" key="15">
    <citation type="journal article" date="1999" name="Biochemistry">
        <title>Carbamoyl phosphate synthetase: closure of the B-domain as a result of nucleotide binding.</title>
        <authorList>
            <person name="Thoden J.B."/>
            <person name="Wesenberg G."/>
            <person name="Raushel F.M."/>
            <person name="Holden H.M."/>
        </authorList>
    </citation>
    <scope>X-RAY CRYSTALLOGRAPHY (2.1 ANGSTROMS) IN COMPLEX WITH ATP ANALOG AND MANGANESE</scope>
</reference>
<reference key="16">
    <citation type="journal article" date="1999" name="Biochemistry">
        <title>The small subunit of carbamoyl phosphate synthetase: snapshots along the reaction pathway.</title>
        <authorList>
            <person name="Thoden J.B."/>
            <person name="Huang X."/>
            <person name="Raushel F.M."/>
            <person name="Holden H.M."/>
        </authorList>
    </citation>
    <scope>X-RAY CRYSTALLOGRAPHY (2.0 ANGSTROMS) IN COMPLEX WITH ADP AND MANGANESE</scope>
</reference>
<reference evidence="19" key="17">
    <citation type="journal article" date="1999" name="J. Biol. Chem.">
        <title>The binding of inosine monophosphate to Escherichia coli carbamoyl phosphate synthetase.</title>
        <authorList>
            <person name="Thoden J.B."/>
            <person name="Raushel F.M."/>
            <person name="Wesenberg G."/>
            <person name="Holden H.M."/>
        </authorList>
    </citation>
    <scope>X-RAY CRYSTALLOGRAPHY (2.1 ANGSTROMS) IN COMPLEX WITH ADP AND MANGANESE</scope>
</reference>